<accession>B1MD87</accession>
<evidence type="ECO:0000250" key="1"/>
<evidence type="ECO:0000255" key="2">
    <source>
        <dbReference type="HAMAP-Rule" id="MF_00100"/>
    </source>
</evidence>
<evidence type="ECO:0000256" key="3">
    <source>
        <dbReference type="SAM" id="MobiDB-lite"/>
    </source>
</evidence>
<reference key="1">
    <citation type="journal article" date="2009" name="PLoS ONE">
        <title>Non mycobacterial virulence genes in the genome of the emerging pathogen Mycobacterium abscessus.</title>
        <authorList>
            <person name="Ripoll F."/>
            <person name="Pasek S."/>
            <person name="Schenowitz C."/>
            <person name="Dossat C."/>
            <person name="Barbe V."/>
            <person name="Rottman M."/>
            <person name="Macheras E."/>
            <person name="Heym B."/>
            <person name="Herrmann J.L."/>
            <person name="Daffe M."/>
            <person name="Brosch R."/>
            <person name="Risler J.L."/>
            <person name="Gaillard J.L."/>
        </authorList>
    </citation>
    <scope>NUCLEOTIDE SEQUENCE [LARGE SCALE GENOMIC DNA]</scope>
    <source>
        <strain>ATCC 19977 / DSM 44196 / CCUG 20993 / CIP 104536 / JCM 13569 / NCTC 13031 / TMC 1543 / L948</strain>
    </source>
</reference>
<gene>
    <name evidence="2" type="primary">infB</name>
    <name type="ordered locus">MAB_3131c</name>
</gene>
<protein>
    <recommendedName>
        <fullName evidence="2">Translation initiation factor IF-2</fullName>
    </recommendedName>
</protein>
<comment type="function">
    <text evidence="2">One of the essential components for the initiation of protein synthesis. Protects formylmethionyl-tRNA from spontaneous hydrolysis and promotes its binding to the 30S ribosomal subunits. Also involved in the hydrolysis of GTP during the formation of the 70S ribosomal complex.</text>
</comment>
<comment type="subcellular location">
    <subcellularLocation>
        <location evidence="2">Cytoplasm</location>
    </subcellularLocation>
</comment>
<comment type="similarity">
    <text evidence="2">Belongs to the TRAFAC class translation factor GTPase superfamily. Classic translation factor GTPase family. IF-2 subfamily.</text>
</comment>
<dbReference type="EMBL" id="CU458896">
    <property type="protein sequence ID" value="CAM63208.1"/>
    <property type="molecule type" value="Genomic_DNA"/>
</dbReference>
<dbReference type="RefSeq" id="WP_012296639.1">
    <property type="nucleotide sequence ID" value="NZ_MLCG01000003.1"/>
</dbReference>
<dbReference type="SMR" id="B1MD87"/>
<dbReference type="GeneID" id="93380063"/>
<dbReference type="KEGG" id="mab:MAB_3131c"/>
<dbReference type="Proteomes" id="UP000007137">
    <property type="component" value="Chromosome"/>
</dbReference>
<dbReference type="GO" id="GO:0005829">
    <property type="term" value="C:cytosol"/>
    <property type="evidence" value="ECO:0007669"/>
    <property type="project" value="TreeGrafter"/>
</dbReference>
<dbReference type="GO" id="GO:0005525">
    <property type="term" value="F:GTP binding"/>
    <property type="evidence" value="ECO:0007669"/>
    <property type="project" value="UniProtKB-KW"/>
</dbReference>
<dbReference type="GO" id="GO:0003924">
    <property type="term" value="F:GTPase activity"/>
    <property type="evidence" value="ECO:0007669"/>
    <property type="project" value="UniProtKB-UniRule"/>
</dbReference>
<dbReference type="GO" id="GO:0003743">
    <property type="term" value="F:translation initiation factor activity"/>
    <property type="evidence" value="ECO:0007669"/>
    <property type="project" value="UniProtKB-UniRule"/>
</dbReference>
<dbReference type="CDD" id="cd01887">
    <property type="entry name" value="IF2_eIF5B"/>
    <property type="match status" value="1"/>
</dbReference>
<dbReference type="CDD" id="cd03702">
    <property type="entry name" value="IF2_mtIF2_II"/>
    <property type="match status" value="1"/>
</dbReference>
<dbReference type="CDD" id="cd03692">
    <property type="entry name" value="mtIF2_IVc"/>
    <property type="match status" value="1"/>
</dbReference>
<dbReference type="FunFam" id="1.10.10.2480:FF:000003">
    <property type="entry name" value="Translation initiation factor IF-2"/>
    <property type="match status" value="1"/>
</dbReference>
<dbReference type="FunFam" id="2.40.30.10:FF:000007">
    <property type="entry name" value="Translation initiation factor IF-2"/>
    <property type="match status" value="1"/>
</dbReference>
<dbReference type="FunFam" id="2.40.30.10:FF:000008">
    <property type="entry name" value="Translation initiation factor IF-2"/>
    <property type="match status" value="1"/>
</dbReference>
<dbReference type="FunFam" id="3.40.50.10050:FF:000001">
    <property type="entry name" value="Translation initiation factor IF-2"/>
    <property type="match status" value="1"/>
</dbReference>
<dbReference type="FunFam" id="3.40.50.300:FF:000019">
    <property type="entry name" value="Translation initiation factor IF-2"/>
    <property type="match status" value="1"/>
</dbReference>
<dbReference type="Gene3D" id="1.10.10.2480">
    <property type="match status" value="1"/>
</dbReference>
<dbReference type="Gene3D" id="3.40.50.300">
    <property type="entry name" value="P-loop containing nucleotide triphosphate hydrolases"/>
    <property type="match status" value="1"/>
</dbReference>
<dbReference type="Gene3D" id="2.40.30.10">
    <property type="entry name" value="Translation factors"/>
    <property type="match status" value="2"/>
</dbReference>
<dbReference type="Gene3D" id="3.40.50.10050">
    <property type="entry name" value="Translation initiation factor IF- 2, domain 3"/>
    <property type="match status" value="1"/>
</dbReference>
<dbReference type="HAMAP" id="MF_00100_B">
    <property type="entry name" value="IF_2_B"/>
    <property type="match status" value="1"/>
</dbReference>
<dbReference type="InterPro" id="IPR053905">
    <property type="entry name" value="EF-G-like_DII"/>
</dbReference>
<dbReference type="InterPro" id="IPR044145">
    <property type="entry name" value="IF2_II"/>
</dbReference>
<dbReference type="InterPro" id="IPR006847">
    <property type="entry name" value="IF2_N"/>
</dbReference>
<dbReference type="InterPro" id="IPR027417">
    <property type="entry name" value="P-loop_NTPase"/>
</dbReference>
<dbReference type="InterPro" id="IPR005225">
    <property type="entry name" value="Small_GTP-bd"/>
</dbReference>
<dbReference type="InterPro" id="IPR000795">
    <property type="entry name" value="T_Tr_GTP-bd_dom"/>
</dbReference>
<dbReference type="InterPro" id="IPR000178">
    <property type="entry name" value="TF_IF2_bacterial-like"/>
</dbReference>
<dbReference type="InterPro" id="IPR015760">
    <property type="entry name" value="TIF_IF2"/>
</dbReference>
<dbReference type="InterPro" id="IPR023115">
    <property type="entry name" value="TIF_IF2_dom3"/>
</dbReference>
<dbReference type="InterPro" id="IPR036925">
    <property type="entry name" value="TIF_IF2_dom3_sf"/>
</dbReference>
<dbReference type="InterPro" id="IPR009000">
    <property type="entry name" value="Transl_B-barrel_sf"/>
</dbReference>
<dbReference type="NCBIfam" id="TIGR00487">
    <property type="entry name" value="IF-2"/>
    <property type="match status" value="1"/>
</dbReference>
<dbReference type="NCBIfam" id="TIGR00231">
    <property type="entry name" value="small_GTP"/>
    <property type="match status" value="1"/>
</dbReference>
<dbReference type="PANTHER" id="PTHR43381:SF5">
    <property type="entry name" value="TR-TYPE G DOMAIN-CONTAINING PROTEIN"/>
    <property type="match status" value="1"/>
</dbReference>
<dbReference type="PANTHER" id="PTHR43381">
    <property type="entry name" value="TRANSLATION INITIATION FACTOR IF-2-RELATED"/>
    <property type="match status" value="1"/>
</dbReference>
<dbReference type="Pfam" id="PF22042">
    <property type="entry name" value="EF-G_D2"/>
    <property type="match status" value="1"/>
</dbReference>
<dbReference type="Pfam" id="PF00009">
    <property type="entry name" value="GTP_EFTU"/>
    <property type="match status" value="1"/>
</dbReference>
<dbReference type="Pfam" id="PF11987">
    <property type="entry name" value="IF-2"/>
    <property type="match status" value="1"/>
</dbReference>
<dbReference type="Pfam" id="PF04760">
    <property type="entry name" value="IF2_N"/>
    <property type="match status" value="2"/>
</dbReference>
<dbReference type="PRINTS" id="PR00315">
    <property type="entry name" value="ELONGATNFCT"/>
</dbReference>
<dbReference type="SUPFAM" id="SSF52156">
    <property type="entry name" value="Initiation factor IF2/eIF5b, domain 3"/>
    <property type="match status" value="1"/>
</dbReference>
<dbReference type="SUPFAM" id="SSF52540">
    <property type="entry name" value="P-loop containing nucleoside triphosphate hydrolases"/>
    <property type="match status" value="1"/>
</dbReference>
<dbReference type="SUPFAM" id="SSF50447">
    <property type="entry name" value="Translation proteins"/>
    <property type="match status" value="2"/>
</dbReference>
<dbReference type="PROSITE" id="PS51722">
    <property type="entry name" value="G_TR_2"/>
    <property type="match status" value="1"/>
</dbReference>
<name>IF2_MYCA9</name>
<sequence length="912" mass="94773">MAGKARVHELAKELGVTSKEVLARLSDQGEFVKSASSTVEAPVARRLRESFGGGDKPAPAASNGAAAEAAAPPKKAGPKPGAPKPAPKKVAEPVVEAPVAPEPPAAPAAPAAPAPKPSPAARPAAAEAAAPAPAPAPAPRPGATPGPKPGAPRVPRVGNNPFSSAQPAERPAPRPQAPRPGAPRPGGASPSNMPPRPSPGSMGPRPPRPGGGPRPGGGPRPGGAGRPGGGGGGNYRGGGTGTGAPAGGPPGAGGGFRGRPGGGGGGGRPGQRGGAAGAFGRPGGAPKRGRKSKRAKRAEYENMQAPVVGGVRLPHGNGEVIRLARGASLSDFAEKIDANPASLVQALFNLGEMVTATQSVGDETLELLGGEMNYVVQVVSPEDEDRELLESFDLTYGEDEGGEEDLRTRPPVVTVMGHVDHGKTRLLDTIRKANVREGEAGGITQHIGAYQVAVEHDGTERPITFIDTPGHEAFTAMRARGAKATDIAILVVAADDGVMPQTVEAINHAQAADVPIVVAVNKIDKEGADPAKIRAQLTEYNLVAEDFGGDTMFVDISARQGTNIEQLLEAVLLTADAALDLRANPDMEAQGVAIEAHLDRGRGPVATVLIQRGTLRVGDSIVAGDAYGRVRRMVDEHGEDVEEALPSRPVQVIGFTSVPGAGDNLLVVDEDRIARQIADRRSARKRNALAARSRKRISLDDLDAALKETSQLNLILKGDNAGTVEALEEALLGIAIDDEVQLRVIDRGVGGVTETNVNLASASDAIIIGFNVRAEGKATELANREGVDIRYYSVIYQAIDEIESALKGMLKPVYEEVELGRAEIRAMFRSSKVGNIAGCLVTSGIIRRNAKARLLRDNIVVAETVTISSLRREKDDVVEVRDGYECGLTLTYNDIKEGDVIEAYELREKERV</sequence>
<feature type="chain" id="PRO_1000093804" description="Translation initiation factor IF-2">
    <location>
        <begin position="1"/>
        <end position="912"/>
    </location>
</feature>
<feature type="domain" description="tr-type G">
    <location>
        <begin position="408"/>
        <end position="579"/>
    </location>
</feature>
<feature type="region of interest" description="Disordered" evidence="3">
    <location>
        <begin position="26"/>
        <end position="297"/>
    </location>
</feature>
<feature type="region of interest" description="G1" evidence="1">
    <location>
        <begin position="417"/>
        <end position="424"/>
    </location>
</feature>
<feature type="region of interest" description="G2" evidence="1">
    <location>
        <begin position="442"/>
        <end position="446"/>
    </location>
</feature>
<feature type="region of interest" description="G3" evidence="1">
    <location>
        <begin position="467"/>
        <end position="470"/>
    </location>
</feature>
<feature type="region of interest" description="G4" evidence="1">
    <location>
        <begin position="521"/>
        <end position="524"/>
    </location>
</feature>
<feature type="region of interest" description="G5" evidence="1">
    <location>
        <begin position="557"/>
        <end position="559"/>
    </location>
</feature>
<feature type="compositionally biased region" description="Low complexity" evidence="3">
    <location>
        <begin position="56"/>
        <end position="74"/>
    </location>
</feature>
<feature type="compositionally biased region" description="Pro residues" evidence="3">
    <location>
        <begin position="100"/>
        <end position="120"/>
    </location>
</feature>
<feature type="compositionally biased region" description="Low complexity" evidence="3">
    <location>
        <begin position="121"/>
        <end position="131"/>
    </location>
</feature>
<feature type="compositionally biased region" description="Pro residues" evidence="3">
    <location>
        <begin position="132"/>
        <end position="152"/>
    </location>
</feature>
<feature type="compositionally biased region" description="Pro residues" evidence="3">
    <location>
        <begin position="173"/>
        <end position="183"/>
    </location>
</feature>
<feature type="compositionally biased region" description="Pro residues" evidence="3">
    <location>
        <begin position="192"/>
        <end position="218"/>
    </location>
</feature>
<feature type="compositionally biased region" description="Gly residues" evidence="3">
    <location>
        <begin position="219"/>
        <end position="283"/>
    </location>
</feature>
<feature type="compositionally biased region" description="Basic residues" evidence="3">
    <location>
        <begin position="287"/>
        <end position="296"/>
    </location>
</feature>
<feature type="binding site" evidence="2">
    <location>
        <begin position="417"/>
        <end position="424"/>
    </location>
    <ligand>
        <name>GTP</name>
        <dbReference type="ChEBI" id="CHEBI:37565"/>
    </ligand>
</feature>
<feature type="binding site" evidence="2">
    <location>
        <begin position="467"/>
        <end position="471"/>
    </location>
    <ligand>
        <name>GTP</name>
        <dbReference type="ChEBI" id="CHEBI:37565"/>
    </ligand>
</feature>
<feature type="binding site" evidence="2">
    <location>
        <begin position="521"/>
        <end position="524"/>
    </location>
    <ligand>
        <name>GTP</name>
        <dbReference type="ChEBI" id="CHEBI:37565"/>
    </ligand>
</feature>
<keyword id="KW-0963">Cytoplasm</keyword>
<keyword id="KW-0342">GTP-binding</keyword>
<keyword id="KW-0396">Initiation factor</keyword>
<keyword id="KW-0547">Nucleotide-binding</keyword>
<keyword id="KW-0648">Protein biosynthesis</keyword>
<keyword id="KW-1185">Reference proteome</keyword>
<proteinExistence type="inferred from homology"/>
<organism>
    <name type="scientific">Mycobacteroides abscessus (strain ATCC 19977 / DSM 44196 / CCUG 20993 / CIP 104536 / JCM 13569 / NCTC 13031 / TMC 1543 / L948)</name>
    <name type="common">Mycobacterium abscessus</name>
    <dbReference type="NCBI Taxonomy" id="561007"/>
    <lineage>
        <taxon>Bacteria</taxon>
        <taxon>Bacillati</taxon>
        <taxon>Actinomycetota</taxon>
        <taxon>Actinomycetes</taxon>
        <taxon>Mycobacteriales</taxon>
        <taxon>Mycobacteriaceae</taxon>
        <taxon>Mycobacteroides</taxon>
        <taxon>Mycobacteroides abscessus</taxon>
    </lineage>
</organism>